<reference key="1">
    <citation type="journal article" date="2007" name="ISME J.">
        <title>Population level functional diversity in a microbial community revealed by comparative genomic and metagenomic analyses.</title>
        <authorList>
            <person name="Bhaya D."/>
            <person name="Grossman A.R."/>
            <person name="Steunou A.-S."/>
            <person name="Khuri N."/>
            <person name="Cohan F.M."/>
            <person name="Hamamura N."/>
            <person name="Melendrez M.C."/>
            <person name="Bateson M.M."/>
            <person name="Ward D.M."/>
            <person name="Heidelberg J.F."/>
        </authorList>
    </citation>
    <scope>NUCLEOTIDE SEQUENCE [LARGE SCALE GENOMIC DNA]</scope>
    <source>
        <strain>JA-2-3B'a(2-13)</strain>
    </source>
</reference>
<gene>
    <name evidence="1" type="primary">recR</name>
    <name type="ordered locus">CYB_2895</name>
</gene>
<evidence type="ECO:0000255" key="1">
    <source>
        <dbReference type="HAMAP-Rule" id="MF_00017"/>
    </source>
</evidence>
<feature type="chain" id="PRO_0000322960" description="Recombination protein RecR">
    <location>
        <begin position="1"/>
        <end position="199"/>
    </location>
</feature>
<feature type="domain" description="Toprim" evidence="1">
    <location>
        <begin position="79"/>
        <end position="174"/>
    </location>
</feature>
<feature type="zinc finger region" description="C4-type" evidence="1">
    <location>
        <begin position="56"/>
        <end position="71"/>
    </location>
</feature>
<dbReference type="EMBL" id="CP000240">
    <property type="protein sequence ID" value="ABD03814.1"/>
    <property type="molecule type" value="Genomic_DNA"/>
</dbReference>
<dbReference type="RefSeq" id="WP_011434433.1">
    <property type="nucleotide sequence ID" value="NC_007776.1"/>
</dbReference>
<dbReference type="SMR" id="Q2JH53"/>
<dbReference type="STRING" id="321332.CYB_2895"/>
<dbReference type="KEGG" id="cyb:CYB_2895"/>
<dbReference type="eggNOG" id="COG0353">
    <property type="taxonomic scope" value="Bacteria"/>
</dbReference>
<dbReference type="HOGENOM" id="CLU_060739_1_0_3"/>
<dbReference type="OrthoDB" id="9802672at2"/>
<dbReference type="Proteomes" id="UP000001938">
    <property type="component" value="Chromosome"/>
</dbReference>
<dbReference type="GO" id="GO:0003677">
    <property type="term" value="F:DNA binding"/>
    <property type="evidence" value="ECO:0007669"/>
    <property type="project" value="UniProtKB-UniRule"/>
</dbReference>
<dbReference type="GO" id="GO:0008270">
    <property type="term" value="F:zinc ion binding"/>
    <property type="evidence" value="ECO:0007669"/>
    <property type="project" value="UniProtKB-KW"/>
</dbReference>
<dbReference type="GO" id="GO:0006310">
    <property type="term" value="P:DNA recombination"/>
    <property type="evidence" value="ECO:0007669"/>
    <property type="project" value="UniProtKB-UniRule"/>
</dbReference>
<dbReference type="GO" id="GO:0006281">
    <property type="term" value="P:DNA repair"/>
    <property type="evidence" value="ECO:0007669"/>
    <property type="project" value="UniProtKB-UniRule"/>
</dbReference>
<dbReference type="CDD" id="cd01025">
    <property type="entry name" value="TOPRIM_recR"/>
    <property type="match status" value="1"/>
</dbReference>
<dbReference type="Gene3D" id="3.30.60.80">
    <property type="match status" value="1"/>
</dbReference>
<dbReference type="Gene3D" id="3.40.1360.10">
    <property type="match status" value="1"/>
</dbReference>
<dbReference type="Gene3D" id="6.10.250.240">
    <property type="match status" value="1"/>
</dbReference>
<dbReference type="Gene3D" id="1.10.8.420">
    <property type="entry name" value="RecR Domain 1"/>
    <property type="match status" value="1"/>
</dbReference>
<dbReference type="HAMAP" id="MF_00017">
    <property type="entry name" value="RecR"/>
    <property type="match status" value="1"/>
</dbReference>
<dbReference type="InterPro" id="IPR000093">
    <property type="entry name" value="DNA_Rcmb_RecR"/>
</dbReference>
<dbReference type="InterPro" id="IPR003583">
    <property type="entry name" value="Hlx-hairpin-Hlx_DNA-bd_motif"/>
</dbReference>
<dbReference type="InterPro" id="IPR023627">
    <property type="entry name" value="Rcmb_RecR"/>
</dbReference>
<dbReference type="InterPro" id="IPR015967">
    <property type="entry name" value="Rcmb_RecR_Znf"/>
</dbReference>
<dbReference type="InterPro" id="IPR006171">
    <property type="entry name" value="TOPRIM_dom"/>
</dbReference>
<dbReference type="InterPro" id="IPR034137">
    <property type="entry name" value="TOPRIM_RecR"/>
</dbReference>
<dbReference type="NCBIfam" id="TIGR00615">
    <property type="entry name" value="recR"/>
    <property type="match status" value="1"/>
</dbReference>
<dbReference type="PANTHER" id="PTHR30446">
    <property type="entry name" value="RECOMBINATION PROTEIN RECR"/>
    <property type="match status" value="1"/>
</dbReference>
<dbReference type="PANTHER" id="PTHR30446:SF0">
    <property type="entry name" value="RECOMBINATION PROTEIN RECR"/>
    <property type="match status" value="1"/>
</dbReference>
<dbReference type="Pfam" id="PF21175">
    <property type="entry name" value="RecR_C"/>
    <property type="match status" value="1"/>
</dbReference>
<dbReference type="Pfam" id="PF21176">
    <property type="entry name" value="RecR_HhH"/>
    <property type="match status" value="1"/>
</dbReference>
<dbReference type="Pfam" id="PF02132">
    <property type="entry name" value="RecR_ZnF"/>
    <property type="match status" value="1"/>
</dbReference>
<dbReference type="Pfam" id="PF13662">
    <property type="entry name" value="Toprim_4"/>
    <property type="match status" value="1"/>
</dbReference>
<dbReference type="SMART" id="SM00278">
    <property type="entry name" value="HhH1"/>
    <property type="match status" value="1"/>
</dbReference>
<dbReference type="SMART" id="SM00493">
    <property type="entry name" value="TOPRIM"/>
    <property type="match status" value="1"/>
</dbReference>
<dbReference type="SUPFAM" id="SSF111304">
    <property type="entry name" value="Recombination protein RecR"/>
    <property type="match status" value="1"/>
</dbReference>
<dbReference type="PROSITE" id="PS01300">
    <property type="entry name" value="RECR"/>
    <property type="match status" value="1"/>
</dbReference>
<dbReference type="PROSITE" id="PS50880">
    <property type="entry name" value="TOPRIM"/>
    <property type="match status" value="1"/>
</dbReference>
<name>RECR_SYNJB</name>
<accession>Q2JH53</accession>
<sequence>MYTRPLARLIEELQRLPGIGSKTAQRLALHLINRPAGEIEALAKALLEAKQTVRHCSICFNWSAEDPCEICRSPQRDPSLWCVVADVKDLIAMERTREFKGLYHVLGGLISPMNGIGVDQLHIRELVARVAREKPQELIFAISPSVEGEVTMHVVKDYLKPVAPTLRMTRLAFGLPMGSELEYADEVTLARALEARQEL</sequence>
<comment type="function">
    <text evidence="1">May play a role in DNA repair. It seems to be involved in an RecBC-independent recombinational process of DNA repair. It may act with RecF and RecO.</text>
</comment>
<comment type="similarity">
    <text evidence="1">Belongs to the RecR family.</text>
</comment>
<organism>
    <name type="scientific">Synechococcus sp. (strain JA-2-3B'a(2-13))</name>
    <name type="common">Cyanobacteria bacterium Yellowstone B-Prime</name>
    <dbReference type="NCBI Taxonomy" id="321332"/>
    <lineage>
        <taxon>Bacteria</taxon>
        <taxon>Bacillati</taxon>
        <taxon>Cyanobacteriota</taxon>
        <taxon>Cyanophyceae</taxon>
        <taxon>Synechococcales</taxon>
        <taxon>Synechococcaceae</taxon>
        <taxon>Synechococcus</taxon>
    </lineage>
</organism>
<protein>
    <recommendedName>
        <fullName evidence="1">Recombination protein RecR</fullName>
    </recommendedName>
</protein>
<keyword id="KW-0227">DNA damage</keyword>
<keyword id="KW-0233">DNA recombination</keyword>
<keyword id="KW-0234">DNA repair</keyword>
<keyword id="KW-0479">Metal-binding</keyword>
<keyword id="KW-1185">Reference proteome</keyword>
<keyword id="KW-0862">Zinc</keyword>
<keyword id="KW-0863">Zinc-finger</keyword>
<proteinExistence type="inferred from homology"/>